<gene>
    <name type="ORF">SPAC16E8.18</name>
</gene>
<sequence length="107" mass="12425">MEVTSFILNATFKEFACFGNNYLIILPGIMLERNVFRHLNYSTNSICSHYQFFGGHYESFELLVVIVYYFSHVGSFSLAEIYRITWDKRIVLYGTTTTLVYCSEGSD</sequence>
<evidence type="ECO:0000255" key="1"/>
<evidence type="ECO:0000269" key="2">
    <source>
    </source>
</evidence>
<organism>
    <name type="scientific">Schizosaccharomyces pombe (strain 972 / ATCC 24843)</name>
    <name type="common">Fission yeast</name>
    <dbReference type="NCBI Taxonomy" id="284812"/>
    <lineage>
        <taxon>Eukaryota</taxon>
        <taxon>Fungi</taxon>
        <taxon>Dikarya</taxon>
        <taxon>Ascomycota</taxon>
        <taxon>Taphrinomycotina</taxon>
        <taxon>Schizosaccharomycetes</taxon>
        <taxon>Schizosaccharomycetales</taxon>
        <taxon>Schizosaccharomycetaceae</taxon>
        <taxon>Schizosaccharomyces</taxon>
    </lineage>
</organism>
<dbReference type="EMBL" id="CU329670">
    <property type="protein sequence ID" value="CAB11040.2"/>
    <property type="molecule type" value="Genomic_DNA"/>
</dbReference>
<dbReference type="RefSeq" id="NP_594224.1">
    <property type="nucleotide sequence ID" value="NM_001019647.1"/>
</dbReference>
<dbReference type="BioGRID" id="278809">
    <property type="interactions" value="2"/>
</dbReference>
<dbReference type="IntAct" id="O13746">
    <property type="interactions" value="1"/>
</dbReference>
<dbReference type="MINT" id="O13746"/>
<dbReference type="PaxDb" id="4896-SPAC16E8.18.1"/>
<dbReference type="EnsemblFungi" id="SPAC16E8.18.1">
    <property type="protein sequence ID" value="SPAC16E8.18.1:pep"/>
    <property type="gene ID" value="SPAC16E8.18"/>
</dbReference>
<dbReference type="KEGG" id="spo:2542343"/>
<dbReference type="PomBase" id="SPAC16E8.18"/>
<dbReference type="VEuPathDB" id="FungiDB:SPAC16E8.18"/>
<dbReference type="HOGENOM" id="CLU_2211478_0_0_1"/>
<dbReference type="InParanoid" id="O13746"/>
<dbReference type="PRO" id="PR:O13746"/>
<dbReference type="Proteomes" id="UP000002485">
    <property type="component" value="Chromosome I"/>
</dbReference>
<dbReference type="GO" id="GO:0005829">
    <property type="term" value="C:cytosol"/>
    <property type="evidence" value="ECO:0007005"/>
    <property type="project" value="PomBase"/>
</dbReference>
<dbReference type="GO" id="GO:0031965">
    <property type="term" value="C:nuclear membrane"/>
    <property type="evidence" value="ECO:0007669"/>
    <property type="project" value="UniProtKB-SubCell"/>
</dbReference>
<dbReference type="GO" id="GO:0005634">
    <property type="term" value="C:nucleus"/>
    <property type="evidence" value="ECO:0007005"/>
    <property type="project" value="PomBase"/>
</dbReference>
<proteinExistence type="predicted"/>
<reference key="1">
    <citation type="journal article" date="2002" name="Nature">
        <title>The genome sequence of Schizosaccharomyces pombe.</title>
        <authorList>
            <person name="Wood V."/>
            <person name="Gwilliam R."/>
            <person name="Rajandream M.A."/>
            <person name="Lyne M.H."/>
            <person name="Lyne R."/>
            <person name="Stewart A."/>
            <person name="Sgouros J.G."/>
            <person name="Peat N."/>
            <person name="Hayles J."/>
            <person name="Baker S.G."/>
            <person name="Basham D."/>
            <person name="Bowman S."/>
            <person name="Brooks K."/>
            <person name="Brown D."/>
            <person name="Brown S."/>
            <person name="Chillingworth T."/>
            <person name="Churcher C.M."/>
            <person name="Collins M."/>
            <person name="Connor R."/>
            <person name="Cronin A."/>
            <person name="Davis P."/>
            <person name="Feltwell T."/>
            <person name="Fraser A."/>
            <person name="Gentles S."/>
            <person name="Goble A."/>
            <person name="Hamlin N."/>
            <person name="Harris D.E."/>
            <person name="Hidalgo J."/>
            <person name="Hodgson G."/>
            <person name="Holroyd S."/>
            <person name="Hornsby T."/>
            <person name="Howarth S."/>
            <person name="Huckle E.J."/>
            <person name="Hunt S."/>
            <person name="Jagels K."/>
            <person name="James K.D."/>
            <person name="Jones L."/>
            <person name="Jones M."/>
            <person name="Leather S."/>
            <person name="McDonald S."/>
            <person name="McLean J."/>
            <person name="Mooney P."/>
            <person name="Moule S."/>
            <person name="Mungall K.L."/>
            <person name="Murphy L.D."/>
            <person name="Niblett D."/>
            <person name="Odell C."/>
            <person name="Oliver K."/>
            <person name="O'Neil S."/>
            <person name="Pearson D."/>
            <person name="Quail M.A."/>
            <person name="Rabbinowitsch E."/>
            <person name="Rutherford K.M."/>
            <person name="Rutter S."/>
            <person name="Saunders D."/>
            <person name="Seeger K."/>
            <person name="Sharp S."/>
            <person name="Skelton J."/>
            <person name="Simmonds M.N."/>
            <person name="Squares R."/>
            <person name="Squares S."/>
            <person name="Stevens K."/>
            <person name="Taylor K."/>
            <person name="Taylor R.G."/>
            <person name="Tivey A."/>
            <person name="Walsh S.V."/>
            <person name="Warren T."/>
            <person name="Whitehead S."/>
            <person name="Woodward J.R."/>
            <person name="Volckaert G."/>
            <person name="Aert R."/>
            <person name="Robben J."/>
            <person name="Grymonprez B."/>
            <person name="Weltjens I."/>
            <person name="Vanstreels E."/>
            <person name="Rieger M."/>
            <person name="Schaefer M."/>
            <person name="Mueller-Auer S."/>
            <person name="Gabel C."/>
            <person name="Fuchs M."/>
            <person name="Duesterhoeft A."/>
            <person name="Fritzc C."/>
            <person name="Holzer E."/>
            <person name="Moestl D."/>
            <person name="Hilbert H."/>
            <person name="Borzym K."/>
            <person name="Langer I."/>
            <person name="Beck A."/>
            <person name="Lehrach H."/>
            <person name="Reinhardt R."/>
            <person name="Pohl T.M."/>
            <person name="Eger P."/>
            <person name="Zimmermann W."/>
            <person name="Wedler H."/>
            <person name="Wambutt R."/>
            <person name="Purnelle B."/>
            <person name="Goffeau A."/>
            <person name="Cadieu E."/>
            <person name="Dreano S."/>
            <person name="Gloux S."/>
            <person name="Lelaure V."/>
            <person name="Mottier S."/>
            <person name="Galibert F."/>
            <person name="Aves S.J."/>
            <person name="Xiang Z."/>
            <person name="Hunt C."/>
            <person name="Moore K."/>
            <person name="Hurst S.M."/>
            <person name="Lucas M."/>
            <person name="Rochet M."/>
            <person name="Gaillardin C."/>
            <person name="Tallada V.A."/>
            <person name="Garzon A."/>
            <person name="Thode G."/>
            <person name="Daga R.R."/>
            <person name="Cruzado L."/>
            <person name="Jimenez J."/>
            <person name="Sanchez M."/>
            <person name="del Rey F."/>
            <person name="Benito J."/>
            <person name="Dominguez A."/>
            <person name="Revuelta J.L."/>
            <person name="Moreno S."/>
            <person name="Armstrong J."/>
            <person name="Forsburg S.L."/>
            <person name="Cerutti L."/>
            <person name="Lowe T."/>
            <person name="McCombie W.R."/>
            <person name="Paulsen I."/>
            <person name="Potashkin J."/>
            <person name="Shpakovski G.V."/>
            <person name="Ussery D."/>
            <person name="Barrell B.G."/>
            <person name="Nurse P."/>
        </authorList>
    </citation>
    <scope>NUCLEOTIDE SEQUENCE [LARGE SCALE GENOMIC DNA]</scope>
    <source>
        <strain>972 / ATCC 24843</strain>
    </source>
</reference>
<reference key="2">
    <citation type="journal article" date="2006" name="Nat. Biotechnol.">
        <title>ORFeome cloning and global analysis of protein localization in the fission yeast Schizosaccharomyces pombe.</title>
        <authorList>
            <person name="Matsuyama A."/>
            <person name="Arai R."/>
            <person name="Yashiroda Y."/>
            <person name="Shirai A."/>
            <person name="Kamata A."/>
            <person name="Sekido S."/>
            <person name="Kobayashi Y."/>
            <person name="Hashimoto A."/>
            <person name="Hamamoto M."/>
            <person name="Hiraoka Y."/>
            <person name="Horinouchi S."/>
            <person name="Yoshida M."/>
        </authorList>
    </citation>
    <scope>SUBCELLULAR LOCATION [LARGE SCALE ANALYSIS]</scope>
</reference>
<comment type="subcellular location">
    <subcellularLocation>
        <location evidence="2">Nucleus membrane</location>
        <topology evidence="2">Single-pass membrane protein</topology>
    </subcellularLocation>
</comment>
<keyword id="KW-0472">Membrane</keyword>
<keyword id="KW-0539">Nucleus</keyword>
<keyword id="KW-1185">Reference proteome</keyword>
<keyword id="KW-0812">Transmembrane</keyword>
<keyword id="KW-1133">Transmembrane helix</keyword>
<accession>O13746</accession>
<protein>
    <recommendedName>
        <fullName>Uncharacterized protein C16E8.18</fullName>
    </recommendedName>
</protein>
<name>YDRI_SCHPO</name>
<feature type="chain" id="PRO_0000304006" description="Uncharacterized protein C16E8.18">
    <location>
        <begin position="1"/>
        <end position="107"/>
    </location>
</feature>
<feature type="transmembrane region" description="Helical" evidence="1">
    <location>
        <begin position="62"/>
        <end position="79"/>
    </location>
</feature>